<comment type="function">
    <text evidence="1">Plays an important role in the de novo pathway and in the salvage pathway of purine nucleotide biosynthesis. Catalyzes the first committed step in the biosynthesis of AMP from IMP (By similarity).</text>
</comment>
<comment type="catalytic activity">
    <reaction evidence="2">
        <text>IMP + L-aspartate + GTP = N(6)-(1,2-dicarboxyethyl)-AMP + GDP + phosphate + 2 H(+)</text>
        <dbReference type="Rhea" id="RHEA:15753"/>
        <dbReference type="ChEBI" id="CHEBI:15378"/>
        <dbReference type="ChEBI" id="CHEBI:29991"/>
        <dbReference type="ChEBI" id="CHEBI:37565"/>
        <dbReference type="ChEBI" id="CHEBI:43474"/>
        <dbReference type="ChEBI" id="CHEBI:57567"/>
        <dbReference type="ChEBI" id="CHEBI:58053"/>
        <dbReference type="ChEBI" id="CHEBI:58189"/>
        <dbReference type="EC" id="6.3.4.4"/>
    </reaction>
</comment>
<comment type="cofactor">
    <cofactor evidence="2">
        <name>Mg(2+)</name>
        <dbReference type="ChEBI" id="CHEBI:18420"/>
    </cofactor>
    <text evidence="2">Binds 1 Mg(2+) ion per subunit.</text>
</comment>
<comment type="pathway">
    <text evidence="2">Purine metabolism; AMP biosynthesis via de novo pathway; AMP from IMP: step 1/2.</text>
</comment>
<comment type="subunit">
    <text evidence="2">Homodimer.</text>
</comment>
<comment type="subcellular location">
    <subcellularLocation>
        <location evidence="2">Plastid</location>
        <location evidence="2">Chloroplast</location>
    </subcellularLocation>
</comment>
<comment type="miscellaneous">
    <text evidence="2">This protein may be expected to contain an N-terminal transit peptide but none has been predicted.</text>
</comment>
<comment type="similarity">
    <text evidence="2">Belongs to the adenylosuccinate synthetase family.</text>
</comment>
<gene>
    <name evidence="2" type="primary">PURA1</name>
    <name type="ORF">RCOM_0113630</name>
</gene>
<organism>
    <name type="scientific">Ricinus communis</name>
    <name type="common">Castor bean</name>
    <dbReference type="NCBI Taxonomy" id="3988"/>
    <lineage>
        <taxon>Eukaryota</taxon>
        <taxon>Viridiplantae</taxon>
        <taxon>Streptophyta</taxon>
        <taxon>Embryophyta</taxon>
        <taxon>Tracheophyta</taxon>
        <taxon>Spermatophyta</taxon>
        <taxon>Magnoliopsida</taxon>
        <taxon>eudicotyledons</taxon>
        <taxon>Gunneridae</taxon>
        <taxon>Pentapetalae</taxon>
        <taxon>rosids</taxon>
        <taxon>fabids</taxon>
        <taxon>Malpighiales</taxon>
        <taxon>Euphorbiaceae</taxon>
        <taxon>Acalyphoideae</taxon>
        <taxon>Acalypheae</taxon>
        <taxon>Ricinus</taxon>
    </lineage>
</organism>
<proteinExistence type="inferred from homology"/>
<accession>B9TAD0</accession>
<reference key="1">
    <citation type="journal article" date="2010" name="Nat. Biotechnol.">
        <title>Draft genome sequence of the oilseed species Ricinus communis.</title>
        <authorList>
            <person name="Chan A.P."/>
            <person name="Crabtree J."/>
            <person name="Zhao Q."/>
            <person name="Lorenzi H."/>
            <person name="Orvis J."/>
            <person name="Puiu D."/>
            <person name="Melake-Berhan A."/>
            <person name="Jones K.M."/>
            <person name="Redman J."/>
            <person name="Chen G."/>
            <person name="Cahoon E.B."/>
            <person name="Gedil M."/>
            <person name="Stanke M."/>
            <person name="Haas B.J."/>
            <person name="Wortman J.R."/>
            <person name="Fraser-Liggett C.M."/>
            <person name="Ravel J."/>
            <person name="Rabinowicz P.D."/>
        </authorList>
    </citation>
    <scope>NUCLEOTIDE SEQUENCE [LARGE SCALE GENOMIC DNA]</scope>
    <source>
        <strain>cv. Hale</strain>
    </source>
</reference>
<feature type="chain" id="PRO_0000399284" description="Adenylosuccinate synthetase 1, chloroplastic">
    <location>
        <begin position="1"/>
        <end position="440"/>
    </location>
</feature>
<feature type="active site" description="Proton acceptor" evidence="2">
    <location>
        <position position="14"/>
    </location>
</feature>
<feature type="active site" description="Proton donor" evidence="2">
    <location>
        <position position="42"/>
    </location>
</feature>
<feature type="binding site" evidence="2">
    <location>
        <begin position="13"/>
        <end position="19"/>
    </location>
    <ligand>
        <name>GTP</name>
        <dbReference type="ChEBI" id="CHEBI:37565"/>
    </ligand>
</feature>
<feature type="binding site" description="in other chain" evidence="2">
    <location>
        <begin position="14"/>
        <end position="17"/>
    </location>
    <ligand>
        <name>IMP</name>
        <dbReference type="ChEBI" id="CHEBI:58053"/>
        <note>ligand shared between dimeric partners</note>
    </ligand>
</feature>
<feature type="binding site" evidence="2">
    <location>
        <position position="14"/>
    </location>
    <ligand>
        <name>Mg(2+)</name>
        <dbReference type="ChEBI" id="CHEBI:18420"/>
    </ligand>
</feature>
<feature type="binding site" description="in other chain" evidence="2">
    <location>
        <begin position="39"/>
        <end position="42"/>
    </location>
    <ligand>
        <name>IMP</name>
        <dbReference type="ChEBI" id="CHEBI:58053"/>
        <note>ligand shared between dimeric partners</note>
    </ligand>
</feature>
<feature type="binding site" evidence="2">
    <location>
        <begin position="41"/>
        <end position="43"/>
    </location>
    <ligand>
        <name>GTP</name>
        <dbReference type="ChEBI" id="CHEBI:37565"/>
    </ligand>
</feature>
<feature type="binding site" evidence="2">
    <location>
        <position position="41"/>
    </location>
    <ligand>
        <name>Mg(2+)</name>
        <dbReference type="ChEBI" id="CHEBI:18420"/>
    </ligand>
</feature>
<feature type="binding site" description="in other chain" evidence="2">
    <location>
        <position position="135"/>
    </location>
    <ligand>
        <name>IMP</name>
        <dbReference type="ChEBI" id="CHEBI:58053"/>
        <note>ligand shared between dimeric partners</note>
    </ligand>
</feature>
<feature type="binding site" evidence="2">
    <location>
        <position position="149"/>
    </location>
    <ligand>
        <name>IMP</name>
        <dbReference type="ChEBI" id="CHEBI:58053"/>
        <note>ligand shared between dimeric partners</note>
    </ligand>
</feature>
<feature type="binding site" description="in other chain" evidence="2">
    <location>
        <position position="230"/>
    </location>
    <ligand>
        <name>IMP</name>
        <dbReference type="ChEBI" id="CHEBI:58053"/>
        <note>ligand shared between dimeric partners</note>
    </ligand>
</feature>
<feature type="binding site" description="in other chain" evidence="2">
    <location>
        <position position="245"/>
    </location>
    <ligand>
        <name>IMP</name>
        <dbReference type="ChEBI" id="CHEBI:58053"/>
        <note>ligand shared between dimeric partners</note>
    </ligand>
</feature>
<feature type="binding site" evidence="2">
    <location>
        <begin position="309"/>
        <end position="315"/>
    </location>
    <ligand>
        <name>substrate</name>
    </ligand>
</feature>
<feature type="binding site" description="in other chain" evidence="2">
    <location>
        <position position="313"/>
    </location>
    <ligand>
        <name>IMP</name>
        <dbReference type="ChEBI" id="CHEBI:58053"/>
        <note>ligand shared between dimeric partners</note>
    </ligand>
</feature>
<feature type="binding site" evidence="2">
    <location>
        <position position="315"/>
    </location>
    <ligand>
        <name>GTP</name>
        <dbReference type="ChEBI" id="CHEBI:37565"/>
    </ligand>
</feature>
<feature type="binding site" evidence="2">
    <location>
        <begin position="341"/>
        <end position="343"/>
    </location>
    <ligand>
        <name>GTP</name>
        <dbReference type="ChEBI" id="CHEBI:37565"/>
    </ligand>
</feature>
<evidence type="ECO:0000250" key="1"/>
<evidence type="ECO:0000255" key="2">
    <source>
        <dbReference type="HAMAP-Rule" id="MF_03125"/>
    </source>
</evidence>
<dbReference type="EC" id="6.3.4.4" evidence="2"/>
<dbReference type="EMBL" id="EQ975697">
    <property type="protein sequence ID" value="EEF27187.1"/>
    <property type="molecule type" value="Genomic_DNA"/>
</dbReference>
<dbReference type="RefSeq" id="XP_002535199.1">
    <property type="nucleotide sequence ID" value="XM_002535153.1"/>
</dbReference>
<dbReference type="SMR" id="B9TAD0"/>
<dbReference type="STRING" id="3988.B9TAD0"/>
<dbReference type="eggNOG" id="KOG1355">
    <property type="taxonomic scope" value="Eukaryota"/>
</dbReference>
<dbReference type="InParanoid" id="B9TAD0"/>
<dbReference type="UniPathway" id="UPA00075">
    <property type="reaction ID" value="UER00335"/>
</dbReference>
<dbReference type="Proteomes" id="UP000008311">
    <property type="component" value="Unassembled WGS sequence"/>
</dbReference>
<dbReference type="GO" id="GO:0009507">
    <property type="term" value="C:chloroplast"/>
    <property type="evidence" value="ECO:0007669"/>
    <property type="project" value="UniProtKB-SubCell"/>
</dbReference>
<dbReference type="GO" id="GO:0005737">
    <property type="term" value="C:cytoplasm"/>
    <property type="evidence" value="ECO:0000318"/>
    <property type="project" value="GO_Central"/>
</dbReference>
<dbReference type="GO" id="GO:0004019">
    <property type="term" value="F:adenylosuccinate synthase activity"/>
    <property type="evidence" value="ECO:0000318"/>
    <property type="project" value="GO_Central"/>
</dbReference>
<dbReference type="GO" id="GO:0005525">
    <property type="term" value="F:GTP binding"/>
    <property type="evidence" value="ECO:0007669"/>
    <property type="project" value="UniProtKB-UniRule"/>
</dbReference>
<dbReference type="GO" id="GO:0000287">
    <property type="term" value="F:magnesium ion binding"/>
    <property type="evidence" value="ECO:0007669"/>
    <property type="project" value="UniProtKB-UniRule"/>
</dbReference>
<dbReference type="GO" id="GO:0044208">
    <property type="term" value="P:'de novo' AMP biosynthetic process"/>
    <property type="evidence" value="ECO:0000318"/>
    <property type="project" value="GO_Central"/>
</dbReference>
<dbReference type="GO" id="GO:0046040">
    <property type="term" value="P:IMP metabolic process"/>
    <property type="evidence" value="ECO:0000318"/>
    <property type="project" value="GO_Central"/>
</dbReference>
<dbReference type="CDD" id="cd03108">
    <property type="entry name" value="AdSS"/>
    <property type="match status" value="1"/>
</dbReference>
<dbReference type="FunFam" id="1.10.300.10:FF:000001">
    <property type="entry name" value="Adenylosuccinate synthetase"/>
    <property type="match status" value="1"/>
</dbReference>
<dbReference type="FunFam" id="3.90.170.10:FF:000001">
    <property type="entry name" value="Adenylosuccinate synthetase"/>
    <property type="match status" value="1"/>
</dbReference>
<dbReference type="Gene3D" id="3.40.440.10">
    <property type="entry name" value="Adenylosuccinate Synthetase, subunit A, domain 1"/>
    <property type="match status" value="1"/>
</dbReference>
<dbReference type="Gene3D" id="1.10.300.10">
    <property type="entry name" value="Adenylosuccinate Synthetase, subunit A, domain 2"/>
    <property type="match status" value="1"/>
</dbReference>
<dbReference type="Gene3D" id="3.90.170.10">
    <property type="entry name" value="Adenylosuccinate Synthetase, subunit A, domain 3"/>
    <property type="match status" value="1"/>
</dbReference>
<dbReference type="HAMAP" id="MF_00011">
    <property type="entry name" value="Adenylosucc_synth"/>
    <property type="match status" value="1"/>
</dbReference>
<dbReference type="InterPro" id="IPR018220">
    <property type="entry name" value="Adenylosuccin_syn_GTP-bd"/>
</dbReference>
<dbReference type="InterPro" id="IPR033128">
    <property type="entry name" value="Adenylosuccin_syn_Lys_AS"/>
</dbReference>
<dbReference type="InterPro" id="IPR042109">
    <property type="entry name" value="Adenylosuccinate_synth_dom1"/>
</dbReference>
<dbReference type="InterPro" id="IPR042110">
    <property type="entry name" value="Adenylosuccinate_synth_dom2"/>
</dbReference>
<dbReference type="InterPro" id="IPR042111">
    <property type="entry name" value="Adenylosuccinate_synth_dom3"/>
</dbReference>
<dbReference type="InterPro" id="IPR001114">
    <property type="entry name" value="Adenylosuccinate_synthetase"/>
</dbReference>
<dbReference type="InterPro" id="IPR027417">
    <property type="entry name" value="P-loop_NTPase"/>
</dbReference>
<dbReference type="NCBIfam" id="NF002223">
    <property type="entry name" value="PRK01117.1"/>
    <property type="match status" value="1"/>
</dbReference>
<dbReference type="NCBIfam" id="TIGR00184">
    <property type="entry name" value="purA"/>
    <property type="match status" value="1"/>
</dbReference>
<dbReference type="PANTHER" id="PTHR11846">
    <property type="entry name" value="ADENYLOSUCCINATE SYNTHETASE"/>
    <property type="match status" value="1"/>
</dbReference>
<dbReference type="PANTHER" id="PTHR11846:SF0">
    <property type="entry name" value="ADENYLOSUCCINATE SYNTHETASE"/>
    <property type="match status" value="1"/>
</dbReference>
<dbReference type="Pfam" id="PF00709">
    <property type="entry name" value="Adenylsucc_synt"/>
    <property type="match status" value="1"/>
</dbReference>
<dbReference type="SMART" id="SM00788">
    <property type="entry name" value="Adenylsucc_synt"/>
    <property type="match status" value="1"/>
</dbReference>
<dbReference type="SUPFAM" id="SSF52540">
    <property type="entry name" value="P-loop containing nucleoside triphosphate hydrolases"/>
    <property type="match status" value="1"/>
</dbReference>
<dbReference type="PROSITE" id="PS01266">
    <property type="entry name" value="ADENYLOSUCCIN_SYN_1"/>
    <property type="match status" value="1"/>
</dbReference>
<dbReference type="PROSITE" id="PS00513">
    <property type="entry name" value="ADENYLOSUCCIN_SYN_2"/>
    <property type="match status" value="1"/>
</dbReference>
<protein>
    <recommendedName>
        <fullName evidence="2">Adenylosuccinate synthetase 1, chloroplastic</fullName>
        <shortName evidence="2">AMPSase 1</shortName>
        <shortName evidence="2">AdSS 1</shortName>
        <ecNumber evidence="2">6.3.4.4</ecNumber>
    </recommendedName>
    <alternativeName>
        <fullName evidence="2">IMP--aspartate ligase 1</fullName>
    </alternativeName>
</protein>
<keyword id="KW-0150">Chloroplast</keyword>
<keyword id="KW-0342">GTP-binding</keyword>
<keyword id="KW-0436">Ligase</keyword>
<keyword id="KW-0460">Magnesium</keyword>
<keyword id="KW-0479">Metal-binding</keyword>
<keyword id="KW-0547">Nucleotide-binding</keyword>
<keyword id="KW-0934">Plastid</keyword>
<keyword id="KW-0658">Purine biosynthesis</keyword>
<keyword id="KW-1185">Reference proteome</keyword>
<sequence>MGKNVVVIGTQWGDEGKGKIVDWLTDHAQGVIRFQGGHNAGHTLVIGQGAAQREYKLNLVPSGIVREGVRCYIGNGVVLDAGHLLEEIGGLESVGVEVRSRLMISPGCPLILGYHVSLDKAREAARTQGKKIGTTGKGIGPTYEDKVARRALRVYDLFYPERFAEKLAEVLDYHNFVLTRHLNTEAVDFQAQLDAAMKHAESLRPLVHDVSAALYDAHQAGHNLLFEGAQGTLLDVDHGTYPYVTSSNCVAGQASAGSGVGPSMLHYVLGITKAYCTRVGGGPFPSELDIETDATPGHQMSDKGREIGTVTRRKRRCGWFDAAALRRSARINGLTGLCITKLDVLDGLSELEICTGYKLDGKVVDLLPVGAEDVARCEPIYEVMPGWQETTFGVKRWDDLPANARAYLKRLEELCGVPVDIVSTGPERDETIVLRHPFGA</sequence>
<name>PURA1_RICCO</name>